<proteinExistence type="inferred from homology"/>
<evidence type="ECO:0000255" key="1">
    <source>
        <dbReference type="HAMAP-Rule" id="MF_00156"/>
    </source>
</evidence>
<dbReference type="EC" id="2.1.2.11" evidence="1"/>
<dbReference type="EMBL" id="AP008230">
    <property type="protein sequence ID" value="BAE82217.1"/>
    <property type="molecule type" value="Genomic_DNA"/>
</dbReference>
<dbReference type="RefSeq" id="WP_011459073.1">
    <property type="nucleotide sequence ID" value="NC_007907.1"/>
</dbReference>
<dbReference type="SMR" id="Q250S5"/>
<dbReference type="STRING" id="138119.DSY0428"/>
<dbReference type="KEGG" id="dsy:DSY0428"/>
<dbReference type="eggNOG" id="COG0413">
    <property type="taxonomic scope" value="Bacteria"/>
</dbReference>
<dbReference type="HOGENOM" id="CLU_036645_1_0_9"/>
<dbReference type="UniPathway" id="UPA00028">
    <property type="reaction ID" value="UER00003"/>
</dbReference>
<dbReference type="Proteomes" id="UP000001946">
    <property type="component" value="Chromosome"/>
</dbReference>
<dbReference type="GO" id="GO:0005737">
    <property type="term" value="C:cytoplasm"/>
    <property type="evidence" value="ECO:0007669"/>
    <property type="project" value="UniProtKB-SubCell"/>
</dbReference>
<dbReference type="GO" id="GO:0003864">
    <property type="term" value="F:3-methyl-2-oxobutanoate hydroxymethyltransferase activity"/>
    <property type="evidence" value="ECO:0007669"/>
    <property type="project" value="UniProtKB-UniRule"/>
</dbReference>
<dbReference type="GO" id="GO:0000287">
    <property type="term" value="F:magnesium ion binding"/>
    <property type="evidence" value="ECO:0007669"/>
    <property type="project" value="TreeGrafter"/>
</dbReference>
<dbReference type="GO" id="GO:0015940">
    <property type="term" value="P:pantothenate biosynthetic process"/>
    <property type="evidence" value="ECO:0007669"/>
    <property type="project" value="UniProtKB-UniRule"/>
</dbReference>
<dbReference type="CDD" id="cd06557">
    <property type="entry name" value="KPHMT-like"/>
    <property type="match status" value="1"/>
</dbReference>
<dbReference type="FunFam" id="3.20.20.60:FF:000003">
    <property type="entry name" value="3-methyl-2-oxobutanoate hydroxymethyltransferase"/>
    <property type="match status" value="1"/>
</dbReference>
<dbReference type="Gene3D" id="3.20.20.60">
    <property type="entry name" value="Phosphoenolpyruvate-binding domains"/>
    <property type="match status" value="1"/>
</dbReference>
<dbReference type="HAMAP" id="MF_00156">
    <property type="entry name" value="PanB"/>
    <property type="match status" value="1"/>
</dbReference>
<dbReference type="InterPro" id="IPR003700">
    <property type="entry name" value="Pantoate_hydroxy_MeTrfase"/>
</dbReference>
<dbReference type="InterPro" id="IPR015813">
    <property type="entry name" value="Pyrv/PenolPyrv_kinase-like_dom"/>
</dbReference>
<dbReference type="InterPro" id="IPR040442">
    <property type="entry name" value="Pyrv_kinase-like_dom_sf"/>
</dbReference>
<dbReference type="NCBIfam" id="TIGR00222">
    <property type="entry name" value="panB"/>
    <property type="match status" value="1"/>
</dbReference>
<dbReference type="NCBIfam" id="NF001452">
    <property type="entry name" value="PRK00311.1"/>
    <property type="match status" value="1"/>
</dbReference>
<dbReference type="PANTHER" id="PTHR20881">
    <property type="entry name" value="3-METHYL-2-OXOBUTANOATE HYDROXYMETHYLTRANSFERASE"/>
    <property type="match status" value="1"/>
</dbReference>
<dbReference type="PANTHER" id="PTHR20881:SF0">
    <property type="entry name" value="3-METHYL-2-OXOBUTANOATE HYDROXYMETHYLTRANSFERASE"/>
    <property type="match status" value="1"/>
</dbReference>
<dbReference type="Pfam" id="PF02548">
    <property type="entry name" value="Pantoate_transf"/>
    <property type="match status" value="1"/>
</dbReference>
<dbReference type="PIRSF" id="PIRSF000388">
    <property type="entry name" value="Pantoate_hydroxy_MeTrfase"/>
    <property type="match status" value="1"/>
</dbReference>
<dbReference type="SUPFAM" id="SSF51621">
    <property type="entry name" value="Phosphoenolpyruvate/pyruvate domain"/>
    <property type="match status" value="1"/>
</dbReference>
<comment type="function">
    <text evidence="1">Catalyzes the reversible reaction in which hydroxymethyl group from 5,10-methylenetetrahydrofolate is transferred onto alpha-ketoisovalerate to form ketopantoate.</text>
</comment>
<comment type="catalytic activity">
    <reaction evidence="1">
        <text>3-methyl-2-oxobutanoate + (6R)-5,10-methylene-5,6,7,8-tetrahydrofolate + H2O = 2-dehydropantoate + (6S)-5,6,7,8-tetrahydrofolate</text>
        <dbReference type="Rhea" id="RHEA:11824"/>
        <dbReference type="ChEBI" id="CHEBI:11561"/>
        <dbReference type="ChEBI" id="CHEBI:11851"/>
        <dbReference type="ChEBI" id="CHEBI:15377"/>
        <dbReference type="ChEBI" id="CHEBI:15636"/>
        <dbReference type="ChEBI" id="CHEBI:57453"/>
        <dbReference type="EC" id="2.1.2.11"/>
    </reaction>
</comment>
<comment type="cofactor">
    <cofactor evidence="1">
        <name>Mg(2+)</name>
        <dbReference type="ChEBI" id="CHEBI:18420"/>
    </cofactor>
    <text evidence="1">Binds 1 Mg(2+) ion per subunit.</text>
</comment>
<comment type="pathway">
    <text evidence="1">Cofactor biosynthesis; (R)-pantothenate biosynthesis; (R)-pantoate from 3-methyl-2-oxobutanoate: step 1/2.</text>
</comment>
<comment type="subunit">
    <text evidence="1">Homodecamer; pentamer of dimers.</text>
</comment>
<comment type="subcellular location">
    <subcellularLocation>
        <location evidence="1">Cytoplasm</location>
    </subcellularLocation>
</comment>
<comment type="similarity">
    <text evidence="1">Belongs to the PanB family.</text>
</comment>
<feature type="chain" id="PRO_0000297259" description="3-methyl-2-oxobutanoate hydroxymethyltransferase">
    <location>
        <begin position="1"/>
        <end position="278"/>
    </location>
</feature>
<feature type="active site" description="Proton acceptor" evidence="1">
    <location>
        <position position="181"/>
    </location>
</feature>
<feature type="binding site" evidence="1">
    <location>
        <begin position="43"/>
        <end position="44"/>
    </location>
    <ligand>
        <name>3-methyl-2-oxobutanoate</name>
        <dbReference type="ChEBI" id="CHEBI:11851"/>
    </ligand>
</feature>
<feature type="binding site" evidence="1">
    <location>
        <position position="43"/>
    </location>
    <ligand>
        <name>Mg(2+)</name>
        <dbReference type="ChEBI" id="CHEBI:18420"/>
    </ligand>
</feature>
<feature type="binding site" evidence="1">
    <location>
        <position position="82"/>
    </location>
    <ligand>
        <name>3-methyl-2-oxobutanoate</name>
        <dbReference type="ChEBI" id="CHEBI:11851"/>
    </ligand>
</feature>
<feature type="binding site" evidence="1">
    <location>
        <position position="82"/>
    </location>
    <ligand>
        <name>Mg(2+)</name>
        <dbReference type="ChEBI" id="CHEBI:18420"/>
    </ligand>
</feature>
<feature type="binding site" evidence="1">
    <location>
        <position position="112"/>
    </location>
    <ligand>
        <name>3-methyl-2-oxobutanoate</name>
        <dbReference type="ChEBI" id="CHEBI:11851"/>
    </ligand>
</feature>
<feature type="binding site" evidence="1">
    <location>
        <position position="114"/>
    </location>
    <ligand>
        <name>Mg(2+)</name>
        <dbReference type="ChEBI" id="CHEBI:18420"/>
    </ligand>
</feature>
<protein>
    <recommendedName>
        <fullName evidence="1">3-methyl-2-oxobutanoate hydroxymethyltransferase</fullName>
        <ecNumber evidence="1">2.1.2.11</ecNumber>
    </recommendedName>
    <alternativeName>
        <fullName evidence="1">Ketopantoate hydroxymethyltransferase</fullName>
        <shortName evidence="1">KPHMT</shortName>
    </alternativeName>
</protein>
<keyword id="KW-0963">Cytoplasm</keyword>
<keyword id="KW-0460">Magnesium</keyword>
<keyword id="KW-0479">Metal-binding</keyword>
<keyword id="KW-0566">Pantothenate biosynthesis</keyword>
<keyword id="KW-1185">Reference proteome</keyword>
<keyword id="KW-0808">Transferase</keyword>
<accession>Q250S5</accession>
<reference key="1">
    <citation type="journal article" date="2006" name="J. Bacteriol.">
        <title>Complete genome sequence of the dehalorespiring bacterium Desulfitobacterium hafniense Y51 and comparison with Dehalococcoides ethenogenes 195.</title>
        <authorList>
            <person name="Nonaka H."/>
            <person name="Keresztes G."/>
            <person name="Shinoda Y."/>
            <person name="Ikenaga Y."/>
            <person name="Abe M."/>
            <person name="Naito K."/>
            <person name="Inatomi K."/>
            <person name="Furukawa K."/>
            <person name="Inui M."/>
            <person name="Yukawa H."/>
        </authorList>
    </citation>
    <scope>NUCLEOTIDE SEQUENCE [LARGE SCALE GENOMIC DNA]</scope>
    <source>
        <strain>Y51</strain>
    </source>
</reference>
<gene>
    <name evidence="1" type="primary">panB</name>
    <name type="ordered locus">DSY0428</name>
</gene>
<name>PANB_DESHY</name>
<sequence length="278" mass="30242">MKTTKDFWVMKNEGKKIVMITAYDYPSAKQAEQAGADIILVGDSLGNVVLGYDSTVYVTMEDMIHHGKAAKRGAPNTFIVADMPFMSCHLSIRDTLLNGARLIQETGAQAVKVEGADEMIPHIRALVRAGIPVVSHLGLTPQTAAVLGGFKVRGKDGEAARKMLEDVKECQEAGAFALVLECIPKQLAQEISTNLTIPTIGIGAGVHTDGQVLVYHDILTYGVNRAPKFVKAYANADQLMLKGLQDYADEVRSMNFPDDEHSFTMKEEELKTLYGGRG</sequence>
<organism>
    <name type="scientific">Desulfitobacterium hafniense (strain Y51)</name>
    <dbReference type="NCBI Taxonomy" id="138119"/>
    <lineage>
        <taxon>Bacteria</taxon>
        <taxon>Bacillati</taxon>
        <taxon>Bacillota</taxon>
        <taxon>Clostridia</taxon>
        <taxon>Eubacteriales</taxon>
        <taxon>Desulfitobacteriaceae</taxon>
        <taxon>Desulfitobacterium</taxon>
    </lineage>
</organism>